<keyword id="KW-0285">Flavoprotein</keyword>
<keyword id="KW-0288">FMN</keyword>
<keyword id="KW-0637">Prenyltransferase</keyword>
<keyword id="KW-1185">Reference proteome</keyword>
<keyword id="KW-0808">Transferase</keyword>
<accession>F9UT67</accession>
<sequence>MKRIVVGITGASGTIYAVDLLEKLHQRPDVEVHLVMSAWAKKNLELETDYSLAQLTALADATYRANDQGAAIASGSFLNDGMVIVPASMKTVAGIAYGFGDNLISRAADVTIKEQRKLVIVPRETPLSVIHLENLTKLAKLGAQIIPPIPAFYNHPQSIQDLVNHQTMKILDAFHIHNETDRRWEGD</sequence>
<proteinExistence type="evidence at transcript level"/>
<evidence type="ECO:0000250" key="1">
    <source>
        <dbReference type="UniProtKB" id="Q9HX08"/>
    </source>
</evidence>
<evidence type="ECO:0000269" key="2">
    <source>
    </source>
</evidence>
<evidence type="ECO:0000303" key="3">
    <source>
    </source>
</evidence>
<evidence type="ECO:0000305" key="4"/>
<evidence type="ECO:0000305" key="5">
    <source>
    </source>
</evidence>
<evidence type="ECO:0000312" key="6">
    <source>
        <dbReference type="EMBL" id="CCC77798.1"/>
    </source>
</evidence>
<evidence type="ECO:0000312" key="7">
    <source>
        <dbReference type="Proteomes" id="UP000000432"/>
    </source>
</evidence>
<organism>
    <name type="scientific">Lactiplantibacillus plantarum (strain ATCC BAA-793 / NCIMB 8826 / WCFS1)</name>
    <name type="common">Lactobacillus plantarum</name>
    <dbReference type="NCBI Taxonomy" id="220668"/>
    <lineage>
        <taxon>Bacteria</taxon>
        <taxon>Bacillati</taxon>
        <taxon>Bacillota</taxon>
        <taxon>Bacilli</taxon>
        <taxon>Lactobacillales</taxon>
        <taxon>Lactobacillaceae</taxon>
        <taxon>Lactiplantibacillus</taxon>
    </lineage>
</organism>
<comment type="function">
    <text evidence="5">Involved in tannin degradation. Flavin prenyltransferase that catalyzes the synthesis of the prenylated FMN cofactor (prenyl-FMN) for gallate decarboxylase LpdC. The prenyltransferase is metal-independent and links a dimethylallyl moiety from dimethylallyl monophosphate (DMAP) to the flavin N5 and C6 atoms of FMN.</text>
</comment>
<comment type="catalytic activity">
    <reaction evidence="1">
        <text>dimethylallyl phosphate + FMNH2 = prenylated FMNH2 + phosphate</text>
        <dbReference type="Rhea" id="RHEA:37743"/>
        <dbReference type="ChEBI" id="CHEBI:43474"/>
        <dbReference type="ChEBI" id="CHEBI:57618"/>
        <dbReference type="ChEBI" id="CHEBI:87467"/>
        <dbReference type="ChEBI" id="CHEBI:88052"/>
        <dbReference type="EC" id="2.5.1.129"/>
    </reaction>
</comment>
<comment type="disruption phenotype">
    <text evidence="2">Cells lacking this gene are unable to decarboxylate gallic acid and protocatechuic acid.</text>
</comment>
<comment type="miscellaneous">
    <text evidence="2">Gallate decarboxylase does not form a complex composed of Lpdc, LpdB and LpdD. The term subunit has been used in reference to the three-gene operon. Gallate decarboxylase LpdC is the only protein required to yield the gallate decarboxylase activity.</text>
</comment>
<comment type="similarity">
    <text evidence="4">Belongs to the UbiX/PAD1 family.</text>
</comment>
<gene>
    <name evidence="3" type="primary">lpdB</name>
    <name evidence="6" type="ordered locus">lp_0271</name>
</gene>
<name>LPDB_LACPL</name>
<reference key="1">
    <citation type="journal article" date="2003" name="Proc. Natl. Acad. Sci. U.S.A.">
        <title>Complete genome sequence of Lactobacillus plantarum WCFS1.</title>
        <authorList>
            <person name="Kleerebezem M."/>
            <person name="Boekhorst J."/>
            <person name="van Kranenburg R."/>
            <person name="Molenaar D."/>
            <person name="Kuipers O.P."/>
            <person name="Leer R."/>
            <person name="Tarchini R."/>
            <person name="Peters S.A."/>
            <person name="Sandbrink H.M."/>
            <person name="Fiers M.W.E.J."/>
            <person name="Stiekema W."/>
            <person name="Klein Lankhorst R.M."/>
            <person name="Bron P.A."/>
            <person name="Hoffer S.M."/>
            <person name="Nierop Groot M.N."/>
            <person name="Kerkhoven R."/>
            <person name="De Vries M."/>
            <person name="Ursing B."/>
            <person name="De Vos W.M."/>
            <person name="Siezen R.J."/>
        </authorList>
    </citation>
    <scope>NUCLEOTIDE SEQUENCE [LARGE SCALE GENOMIC DNA]</scope>
    <source>
        <strain evidence="7">ATCC BAA-793 / NCIMB 8826 / WCFS1</strain>
    </source>
</reference>
<reference key="2">
    <citation type="journal article" date="2012" name="J. Bacteriol.">
        <title>Complete resequencing and reannotation of the Lactobacillus plantarum WCFS1 genome.</title>
        <authorList>
            <person name="Siezen R.J."/>
            <person name="Francke C."/>
            <person name="Renckens B."/>
            <person name="Boekhorst J."/>
            <person name="Wels M."/>
            <person name="Kleerebezem M."/>
            <person name="van Hijum S.A."/>
        </authorList>
    </citation>
    <scope>NUCLEOTIDE SEQUENCE [LARGE SCALE GENOMIC DNA]</scope>
    <scope>GENOME REANNOTATION</scope>
    <source>
        <strain evidence="7">ATCC BAA-793 / NCIMB 8826 / WCFS1</strain>
    </source>
</reference>
<reference key="3">
    <citation type="journal article" date="2013" name="Appl. Environ. Microbiol.">
        <title>Uncovering the Lactobacillus plantarum WCFS1 gallate decarboxylase involved in tannin degradation.</title>
        <authorList>
            <person name="Jimenez N."/>
            <person name="Curiel J.A."/>
            <person name="Reveron I."/>
            <person name="de Las Rivas B."/>
            <person name="Munoz R."/>
        </authorList>
    </citation>
    <scope>FUNCTION</scope>
    <scope>INDUCTION</scope>
    <scope>DISRUPTION PHENOTYPE</scope>
    <source>
        <strain>ATCC BAA-793 / NCIMB 8826 / WCFS1</strain>
    </source>
</reference>
<feature type="chain" id="PRO_0000444000" description="Flavin prenyltransferase LpdB">
    <location>
        <begin position="1"/>
        <end position="187"/>
    </location>
</feature>
<feature type="binding site" evidence="1">
    <location>
        <begin position="10"/>
        <end position="12"/>
    </location>
    <ligand>
        <name>FMN</name>
        <dbReference type="ChEBI" id="CHEBI:58210"/>
    </ligand>
</feature>
<feature type="binding site" evidence="1">
    <location>
        <position position="37"/>
    </location>
    <ligand>
        <name>FMN</name>
        <dbReference type="ChEBI" id="CHEBI:58210"/>
    </ligand>
</feature>
<feature type="binding site" evidence="1">
    <location>
        <begin position="88"/>
        <end position="91"/>
    </location>
    <ligand>
        <name>FMN</name>
        <dbReference type="ChEBI" id="CHEBI:58210"/>
    </ligand>
</feature>
<feature type="binding site" evidence="1">
    <location>
        <position position="123"/>
    </location>
    <ligand>
        <name>FMN</name>
        <dbReference type="ChEBI" id="CHEBI:58210"/>
    </ligand>
</feature>
<feature type="binding site" evidence="1">
    <location>
        <position position="153"/>
    </location>
    <ligand>
        <name>dimethylallyl phosphate</name>
        <dbReference type="ChEBI" id="CHEBI:88052"/>
    </ligand>
</feature>
<feature type="binding site" evidence="1">
    <location>
        <position position="169"/>
    </location>
    <ligand>
        <name>dimethylallyl phosphate</name>
        <dbReference type="ChEBI" id="CHEBI:88052"/>
    </ligand>
</feature>
<dbReference type="EC" id="2.5.1.129" evidence="1"/>
<dbReference type="EMBL" id="AL935263">
    <property type="protein sequence ID" value="CCC77798.1"/>
    <property type="molecule type" value="Genomic_DNA"/>
</dbReference>
<dbReference type="RefSeq" id="WP_003643707.1">
    <property type="nucleotide sequence ID" value="NC_004567.2"/>
</dbReference>
<dbReference type="RefSeq" id="YP_004888312.1">
    <property type="nucleotide sequence ID" value="NC_004567.2"/>
</dbReference>
<dbReference type="SMR" id="F9UT67"/>
<dbReference type="STRING" id="220668.lp_0271"/>
<dbReference type="EnsemblBacteria" id="CCC77798">
    <property type="protein sequence ID" value="CCC77798"/>
    <property type="gene ID" value="lp_0271"/>
</dbReference>
<dbReference type="KEGG" id="lpl:lp_0271"/>
<dbReference type="PATRIC" id="fig|220668.9.peg.225"/>
<dbReference type="eggNOG" id="COG0163">
    <property type="taxonomic scope" value="Bacteria"/>
</dbReference>
<dbReference type="HOGENOM" id="CLU_074522_0_1_9"/>
<dbReference type="OrthoDB" id="9781577at2"/>
<dbReference type="PhylomeDB" id="F9UT67"/>
<dbReference type="BioCyc" id="MetaCyc:MONOMER-19903"/>
<dbReference type="Proteomes" id="UP000000432">
    <property type="component" value="Chromosome"/>
</dbReference>
<dbReference type="GO" id="GO:0016831">
    <property type="term" value="F:carboxy-lyase activity"/>
    <property type="evidence" value="ECO:0007669"/>
    <property type="project" value="TreeGrafter"/>
</dbReference>
<dbReference type="GO" id="GO:0106141">
    <property type="term" value="F:flavin prenyltransferase activity"/>
    <property type="evidence" value="ECO:0007669"/>
    <property type="project" value="UniProtKB-EC"/>
</dbReference>
<dbReference type="FunFam" id="3.40.50.1950:FF:000001">
    <property type="entry name" value="Flavin prenyltransferase UbiX"/>
    <property type="match status" value="1"/>
</dbReference>
<dbReference type="Gene3D" id="3.40.50.1950">
    <property type="entry name" value="Flavin prenyltransferase-like"/>
    <property type="match status" value="1"/>
</dbReference>
<dbReference type="HAMAP" id="MF_01984">
    <property type="entry name" value="ubiX_pad"/>
    <property type="match status" value="1"/>
</dbReference>
<dbReference type="InterPro" id="IPR036551">
    <property type="entry name" value="Flavin_trans-like"/>
</dbReference>
<dbReference type="InterPro" id="IPR003382">
    <property type="entry name" value="Flavoprotein"/>
</dbReference>
<dbReference type="InterPro" id="IPR004507">
    <property type="entry name" value="UbiX-like"/>
</dbReference>
<dbReference type="NCBIfam" id="NF004685">
    <property type="entry name" value="PRK06029.1"/>
    <property type="match status" value="1"/>
</dbReference>
<dbReference type="NCBIfam" id="TIGR00421">
    <property type="entry name" value="ubiX_pad"/>
    <property type="match status" value="1"/>
</dbReference>
<dbReference type="PANTHER" id="PTHR43374">
    <property type="entry name" value="FLAVIN PRENYLTRANSFERASE"/>
    <property type="match status" value="1"/>
</dbReference>
<dbReference type="PANTHER" id="PTHR43374:SF1">
    <property type="entry name" value="FLAVIN PRENYLTRANSFERASE PAD1, MITOCHONDRIAL"/>
    <property type="match status" value="1"/>
</dbReference>
<dbReference type="Pfam" id="PF02441">
    <property type="entry name" value="Flavoprotein"/>
    <property type="match status" value="1"/>
</dbReference>
<dbReference type="SUPFAM" id="SSF52507">
    <property type="entry name" value="Homo-oligomeric flavin-containing Cys decarboxylases, HFCD"/>
    <property type="match status" value="1"/>
</dbReference>
<protein>
    <recommendedName>
        <fullName evidence="4">Flavin prenyltransferase LpdB</fullName>
        <ecNumber evidence="1">2.5.1.129</ecNumber>
    </recommendedName>
    <alternativeName>
        <fullName evidence="3">Gallate decarboxylase subunit B</fullName>
    </alternativeName>
</protein>